<sequence length="234" mass="24779">MAKLTKRMRVIRDKVEVTKEYEINEAVALLKELATAKFVESVDVAVNLGIDARKSDQNVRGATVLPHGTGRDIRVAVFTQGANAEAAKAAGADIVGMEDLAEQVKKGEMNFDVVVASPDAMRVVGQLGTILGPRGLMPNPKVGTVTPNVAEAVKNAKAGQVRYRNDKNGIIHTTIGKASFEANQLQENLEALLVALKKAKPSSAKGTFLKKVSISTTMGAGVTVDQASLDTQAN</sequence>
<gene>
    <name evidence="1" type="primary">rplA</name>
    <name type="ordered locus">VS_2967</name>
</gene>
<feature type="chain" id="PRO_1000165711" description="Large ribosomal subunit protein uL1">
    <location>
        <begin position="1"/>
        <end position="234"/>
    </location>
</feature>
<protein>
    <recommendedName>
        <fullName evidence="1">Large ribosomal subunit protein uL1</fullName>
    </recommendedName>
    <alternativeName>
        <fullName evidence="2">50S ribosomal protein L1</fullName>
    </alternativeName>
</protein>
<name>RL1_VIBA3</name>
<proteinExistence type="inferred from homology"/>
<organism>
    <name type="scientific">Vibrio atlanticus (strain LGP32)</name>
    <name type="common">Vibrio splendidus (strain Mel32)</name>
    <dbReference type="NCBI Taxonomy" id="575788"/>
    <lineage>
        <taxon>Bacteria</taxon>
        <taxon>Pseudomonadati</taxon>
        <taxon>Pseudomonadota</taxon>
        <taxon>Gammaproteobacteria</taxon>
        <taxon>Vibrionales</taxon>
        <taxon>Vibrionaceae</taxon>
        <taxon>Vibrio</taxon>
    </lineage>
</organism>
<accession>B7VM73</accession>
<dbReference type="EMBL" id="FM954972">
    <property type="protein sequence ID" value="CAV20263.1"/>
    <property type="molecule type" value="Genomic_DNA"/>
</dbReference>
<dbReference type="SMR" id="B7VM73"/>
<dbReference type="STRING" id="575788.VS_2967"/>
<dbReference type="KEGG" id="vsp:VS_2967"/>
<dbReference type="eggNOG" id="COG0081">
    <property type="taxonomic scope" value="Bacteria"/>
</dbReference>
<dbReference type="HOGENOM" id="CLU_062853_0_0_6"/>
<dbReference type="Proteomes" id="UP000009100">
    <property type="component" value="Chromosome 1"/>
</dbReference>
<dbReference type="GO" id="GO:0022625">
    <property type="term" value="C:cytosolic large ribosomal subunit"/>
    <property type="evidence" value="ECO:0007669"/>
    <property type="project" value="TreeGrafter"/>
</dbReference>
<dbReference type="GO" id="GO:0019843">
    <property type="term" value="F:rRNA binding"/>
    <property type="evidence" value="ECO:0007669"/>
    <property type="project" value="UniProtKB-UniRule"/>
</dbReference>
<dbReference type="GO" id="GO:0003735">
    <property type="term" value="F:structural constituent of ribosome"/>
    <property type="evidence" value="ECO:0007669"/>
    <property type="project" value="InterPro"/>
</dbReference>
<dbReference type="GO" id="GO:0000049">
    <property type="term" value="F:tRNA binding"/>
    <property type="evidence" value="ECO:0007669"/>
    <property type="project" value="UniProtKB-KW"/>
</dbReference>
<dbReference type="GO" id="GO:0006417">
    <property type="term" value="P:regulation of translation"/>
    <property type="evidence" value="ECO:0007669"/>
    <property type="project" value="UniProtKB-KW"/>
</dbReference>
<dbReference type="GO" id="GO:0006412">
    <property type="term" value="P:translation"/>
    <property type="evidence" value="ECO:0007669"/>
    <property type="project" value="UniProtKB-UniRule"/>
</dbReference>
<dbReference type="CDD" id="cd00403">
    <property type="entry name" value="Ribosomal_L1"/>
    <property type="match status" value="1"/>
</dbReference>
<dbReference type="FunFam" id="3.40.50.790:FF:000001">
    <property type="entry name" value="50S ribosomal protein L1"/>
    <property type="match status" value="1"/>
</dbReference>
<dbReference type="Gene3D" id="3.30.190.20">
    <property type="match status" value="1"/>
</dbReference>
<dbReference type="Gene3D" id="3.40.50.790">
    <property type="match status" value="1"/>
</dbReference>
<dbReference type="HAMAP" id="MF_01318_B">
    <property type="entry name" value="Ribosomal_uL1_B"/>
    <property type="match status" value="1"/>
</dbReference>
<dbReference type="InterPro" id="IPR005878">
    <property type="entry name" value="Ribosom_uL1_bac-type"/>
</dbReference>
<dbReference type="InterPro" id="IPR002143">
    <property type="entry name" value="Ribosomal_uL1"/>
</dbReference>
<dbReference type="InterPro" id="IPR023674">
    <property type="entry name" value="Ribosomal_uL1-like"/>
</dbReference>
<dbReference type="InterPro" id="IPR028364">
    <property type="entry name" value="Ribosomal_uL1/biogenesis"/>
</dbReference>
<dbReference type="InterPro" id="IPR016095">
    <property type="entry name" value="Ribosomal_uL1_3-a/b-sand"/>
</dbReference>
<dbReference type="InterPro" id="IPR023673">
    <property type="entry name" value="Ribosomal_uL1_CS"/>
</dbReference>
<dbReference type="NCBIfam" id="TIGR01169">
    <property type="entry name" value="rplA_bact"/>
    <property type="match status" value="1"/>
</dbReference>
<dbReference type="PANTHER" id="PTHR36427">
    <property type="entry name" value="54S RIBOSOMAL PROTEIN L1, MITOCHONDRIAL"/>
    <property type="match status" value="1"/>
</dbReference>
<dbReference type="PANTHER" id="PTHR36427:SF3">
    <property type="entry name" value="LARGE RIBOSOMAL SUBUNIT PROTEIN UL1M"/>
    <property type="match status" value="1"/>
</dbReference>
<dbReference type="Pfam" id="PF00687">
    <property type="entry name" value="Ribosomal_L1"/>
    <property type="match status" value="1"/>
</dbReference>
<dbReference type="PIRSF" id="PIRSF002155">
    <property type="entry name" value="Ribosomal_L1"/>
    <property type="match status" value="1"/>
</dbReference>
<dbReference type="SUPFAM" id="SSF56808">
    <property type="entry name" value="Ribosomal protein L1"/>
    <property type="match status" value="1"/>
</dbReference>
<dbReference type="PROSITE" id="PS01199">
    <property type="entry name" value="RIBOSOMAL_L1"/>
    <property type="match status" value="1"/>
</dbReference>
<reference key="1">
    <citation type="submission" date="2009-02" db="EMBL/GenBank/DDBJ databases">
        <title>Vibrio splendidus str. LGP32 complete genome.</title>
        <authorList>
            <person name="Mazel D."/>
            <person name="Le Roux F."/>
        </authorList>
    </citation>
    <scope>NUCLEOTIDE SEQUENCE [LARGE SCALE GENOMIC DNA]</scope>
    <source>
        <strain>LGP32</strain>
    </source>
</reference>
<keyword id="KW-0678">Repressor</keyword>
<keyword id="KW-0687">Ribonucleoprotein</keyword>
<keyword id="KW-0689">Ribosomal protein</keyword>
<keyword id="KW-0694">RNA-binding</keyword>
<keyword id="KW-0699">rRNA-binding</keyword>
<keyword id="KW-0810">Translation regulation</keyword>
<keyword id="KW-0820">tRNA-binding</keyword>
<comment type="function">
    <text evidence="1">Binds directly to 23S rRNA. The L1 stalk is quite mobile in the ribosome, and is involved in E site tRNA release.</text>
</comment>
<comment type="function">
    <text evidence="1">Protein L1 is also a translational repressor protein, it controls the translation of the L11 operon by binding to its mRNA.</text>
</comment>
<comment type="subunit">
    <text evidence="1">Part of the 50S ribosomal subunit.</text>
</comment>
<comment type="similarity">
    <text evidence="1">Belongs to the universal ribosomal protein uL1 family.</text>
</comment>
<evidence type="ECO:0000255" key="1">
    <source>
        <dbReference type="HAMAP-Rule" id="MF_01318"/>
    </source>
</evidence>
<evidence type="ECO:0000305" key="2"/>